<accession>O57269</accession>
<accession>Q0A2D2</accession>
<protein>
    <recommendedName>
        <fullName evidence="1">Nuclear export protein</fullName>
        <shortName evidence="1">NEP</shortName>
    </recommendedName>
    <alternativeName>
        <fullName evidence="1">Non-structural protein 2</fullName>
        <shortName evidence="1">NS2</shortName>
    </alternativeName>
</protein>
<reference key="1">
    <citation type="submission" date="1997-04" db="EMBL/GenBank/DDBJ databases">
        <title>Comparison of avian influenza nonstructural gene sequences.</title>
        <authorList>
            <person name="Suarez D.L."/>
        </authorList>
    </citation>
    <scope>NUCLEOTIDE SEQUENCE [GENOMIC RNA]</scope>
</reference>
<reference key="2">
    <citation type="journal article" date="2006" name="Science">
        <title>Large-scale sequence analysis of avian influenza isolates.</title>
        <authorList>
            <person name="Obenauer J.C."/>
            <person name="Denson J."/>
            <person name="Mehta P.K."/>
            <person name="Su X."/>
            <person name="Mukatira S."/>
            <person name="Finkelstein D.B."/>
            <person name="Xu X."/>
            <person name="Wang J."/>
            <person name="Ma J."/>
            <person name="Fan Y."/>
            <person name="Rakestraw K.M."/>
            <person name="Webster R.G."/>
            <person name="Hoffmann E."/>
            <person name="Krauss S."/>
            <person name="Zheng J."/>
            <person name="Zhang Z."/>
            <person name="Naeve C.W."/>
        </authorList>
    </citation>
    <scope>NUCLEOTIDE SEQUENCE [GENOMIC RNA]</scope>
</reference>
<keyword id="KW-0025">Alternative splicing</keyword>
<keyword id="KW-1048">Host nucleus</keyword>
<keyword id="KW-0945">Host-virus interaction</keyword>
<keyword id="KW-0813">Transport</keyword>
<keyword id="KW-0946">Virion</keyword>
<organism>
    <name type="scientific">Influenza A virus (strain A/Chicken/Pennsylvania/1370/1983 H5N2)</name>
    <dbReference type="NCBI Taxonomy" id="385617"/>
    <lineage>
        <taxon>Viruses</taxon>
        <taxon>Riboviria</taxon>
        <taxon>Orthornavirae</taxon>
        <taxon>Negarnaviricota</taxon>
        <taxon>Polyploviricotina</taxon>
        <taxon>Insthoviricetes</taxon>
        <taxon>Articulavirales</taxon>
        <taxon>Orthomyxoviridae</taxon>
        <taxon>Alphainfluenzavirus</taxon>
        <taxon>Alphainfluenzavirus influenzae</taxon>
        <taxon>Influenza A virus</taxon>
    </lineage>
</organism>
<gene>
    <name evidence="1" type="primary">NS</name>
</gene>
<name>NEP_I83A6</name>
<evidence type="ECO:0000255" key="1">
    <source>
        <dbReference type="HAMAP-Rule" id="MF_04067"/>
    </source>
</evidence>
<sequence length="121" mass="14369">MDSNTVSSFQDILMRMSKMQLGSSSEDLNGMITQFESLKLYRDSLGKAVMRMGDLHSLQSRNGNWRRQLSQKFEEIRWLIEEVRHRLKITENSFEQITFMQALQLLLEVEQEMRTFSFQLI</sequence>
<proteinExistence type="inferred from homology"/>
<comment type="function">
    <text evidence="1">Mediates the nuclear export of encapsidated genomic RNAs (ribonucleoproteins, RNPs). Acts as an adapter between viral RNPs complexes and the nuclear export machinery of the cell. Possesses no intrinsic RNA-binding activity, but includes a C-terminal M1-binding domain. This domain is believed to allow recognition of RNPs bound to the protein M1. Since protein M1 is not available in large quantities before late stages of infection, such an indirect recognition mechanism probably ensures that genomic RNPs are not exported from the host nucleus until sufficient quantities of viral mRNA and progeny genomic RNA have been synthesized. Furthermore, the RNPs enter the host cytoplasm only when associated with the M1 protein that is necessary to guide them to the plasma membrane. May down-regulate viral RNA synthesis when overproduced.</text>
</comment>
<comment type="subunit">
    <text evidence="1">Interacts with protein M1. May interact with host nucleoporin RAB/HRB and exportin XPO1/CRM1.</text>
</comment>
<comment type="subcellular location">
    <subcellularLocation>
        <location evidence="1">Virion</location>
    </subcellularLocation>
    <subcellularLocation>
        <location evidence="1">Host nucleus</location>
    </subcellularLocation>
</comment>
<comment type="alternative products">
    <event type="alternative splicing"/>
    <isoform>
        <id>O57269-1</id>
        <name>NEP</name>
        <name>NS2</name>
        <sequence type="displayed"/>
    </isoform>
    <isoform>
        <id>O57268-1</id>
        <name>NS1</name>
        <sequence type="external"/>
    </isoform>
</comment>
<comment type="miscellaneous">
    <text>Average number present in a viral particle is estimated to be 130-200 molecules.</text>
</comment>
<comment type="similarity">
    <text evidence="1">Belongs to the influenza viruses NEP family.</text>
</comment>
<feature type="chain" id="PRO_0000078981" description="Nuclear export protein">
    <location>
        <begin position="1"/>
        <end position="121"/>
    </location>
</feature>
<feature type="short sequence motif" description="Nuclear export signal" evidence="1">
    <location>
        <begin position="12"/>
        <end position="21"/>
    </location>
</feature>
<feature type="short sequence motif" description="Nuclear export signal" evidence="1">
    <location>
        <begin position="85"/>
        <end position="94"/>
    </location>
</feature>
<feature type="sequence conflict" description="In Ref. 1; AAB93937." ref="1">
    <original>Q</original>
    <variation>H</variation>
    <location>
        <position position="68"/>
    </location>
</feature>
<feature type="sequence conflict" description="In Ref. 1; AAB93937." ref="1">
    <original>E</original>
    <variation>G</variation>
    <location>
        <position position="112"/>
    </location>
</feature>
<organismHost>
    <name type="scientific">Aves</name>
    <dbReference type="NCBI Taxonomy" id="8782"/>
</organismHost>
<dbReference type="EMBL" id="U96739">
    <property type="protein sequence ID" value="AAB93937.1"/>
    <property type="molecule type" value="Genomic_RNA"/>
</dbReference>
<dbReference type="EMBL" id="CY015112">
    <property type="protein sequence ID" value="ABI85151.1"/>
    <property type="molecule type" value="Genomic_RNA"/>
</dbReference>
<dbReference type="SMR" id="O57269"/>
<dbReference type="Proteomes" id="UP000105783">
    <property type="component" value="Genome"/>
</dbReference>
<dbReference type="GO" id="GO:0042025">
    <property type="term" value="C:host cell nucleus"/>
    <property type="evidence" value="ECO:0007669"/>
    <property type="project" value="UniProtKB-SubCell"/>
</dbReference>
<dbReference type="GO" id="GO:0044423">
    <property type="term" value="C:virion component"/>
    <property type="evidence" value="ECO:0007669"/>
    <property type="project" value="UniProtKB-UniRule"/>
</dbReference>
<dbReference type="GO" id="GO:0039675">
    <property type="term" value="P:exit of virus from host cell nucleus through nuclear pore"/>
    <property type="evidence" value="ECO:0007669"/>
    <property type="project" value="UniProtKB-UniRule"/>
</dbReference>
<dbReference type="Gene3D" id="1.10.287.230">
    <property type="match status" value="1"/>
</dbReference>
<dbReference type="Gene3D" id="1.10.287.10">
    <property type="entry name" value="S15/NS1, RNA-binding"/>
    <property type="match status" value="1"/>
</dbReference>
<dbReference type="HAMAP" id="MF_04067">
    <property type="entry name" value="INFV_NEP"/>
    <property type="match status" value="1"/>
</dbReference>
<dbReference type="InterPro" id="IPR000968">
    <property type="entry name" value="Flu_NS2"/>
</dbReference>
<dbReference type="Pfam" id="PF00601">
    <property type="entry name" value="Flu_NS2"/>
    <property type="match status" value="1"/>
</dbReference>
<dbReference type="SUPFAM" id="SSF101156">
    <property type="entry name" value="Nonstructural protein ns2, Nep, M1-binding domain"/>
    <property type="match status" value="1"/>
</dbReference>